<organism>
    <name type="scientific">Human cytomegalovirus (strain AD169)</name>
    <name type="common">HHV-5</name>
    <name type="synonym">Human herpesvirus 5</name>
    <dbReference type="NCBI Taxonomy" id="10360"/>
    <lineage>
        <taxon>Viruses</taxon>
        <taxon>Duplodnaviria</taxon>
        <taxon>Heunggongvirae</taxon>
        <taxon>Peploviricota</taxon>
        <taxon>Herviviricetes</taxon>
        <taxon>Herpesvirales</taxon>
        <taxon>Orthoherpesviridae</taxon>
        <taxon>Betaherpesvirinae</taxon>
        <taxon>Cytomegalovirus</taxon>
        <taxon>Cytomegalovirus humanbeta5</taxon>
        <taxon>Human cytomegalovirus</taxon>
    </lineage>
</organism>
<gene>
    <name type="primary">UL108</name>
</gene>
<organismHost>
    <name type="scientific">Homo sapiens</name>
    <name type="common">Human</name>
    <dbReference type="NCBI Taxonomy" id="9606"/>
</organismHost>
<accession>P16829</accession>
<sequence length="123" mass="14500">GHRRPRRRVYSVRCDHCVEPEKARLARRLRIGSRVCGIPKNIISWSSFFDVLLSSRSCFVFFFLFSRWNFSSVRVLVMEACVFEHEFEKIKRPIFVSKKGQISIFLTYIMVNSESYGVLLSLK</sequence>
<feature type="chain" id="PRO_0000115347" description="Uncharacterized protein UL108">
    <location>
        <begin position="1"/>
        <end position="123"/>
    </location>
</feature>
<proteinExistence type="predicted"/>
<dbReference type="EMBL" id="X17403">
    <property type="protein sequence ID" value="CAA35344.1"/>
    <property type="molecule type" value="Genomic_DNA"/>
</dbReference>
<dbReference type="PIR" id="S09873">
    <property type="entry name" value="S09873"/>
</dbReference>
<dbReference type="Proteomes" id="UP000008991">
    <property type="component" value="Segment"/>
</dbReference>
<protein>
    <recommendedName>
        <fullName>Uncharacterized protein UL108</fullName>
    </recommendedName>
</protein>
<name>UL108_HCMVA</name>
<reference key="1">
    <citation type="journal article" date="1990" name="Curr. Top. Microbiol. Immunol.">
        <title>Analysis of the protein-coding content of the sequence of human cytomegalovirus strain AD169.</title>
        <authorList>
            <person name="Chee M.S."/>
            <person name="Bankier A.T."/>
            <person name="Beck S."/>
            <person name="Bohni R."/>
            <person name="Brown C.M."/>
            <person name="Cerny R."/>
            <person name="Horsnell T."/>
            <person name="Hutchison C.A. III"/>
            <person name="Kouzarides T."/>
            <person name="Martignetti J.A."/>
            <person name="Preddie E."/>
            <person name="Satchwell S.C."/>
            <person name="Tomlinson P."/>
            <person name="Weston K.M."/>
            <person name="Barrell B.G."/>
        </authorList>
    </citation>
    <scope>NUCLEOTIDE SEQUENCE [LARGE SCALE GENOMIC DNA]</scope>
</reference>